<dbReference type="EMBL" id="U75930">
    <property type="protein sequence ID" value="AAC59143.1"/>
    <property type="molecule type" value="Genomic_DNA"/>
</dbReference>
<dbReference type="RefSeq" id="NP_046300.1">
    <property type="nucleotide sequence ID" value="NC_001875.2"/>
</dbReference>
<dbReference type="KEGG" id="vg:912090"/>
<dbReference type="OrthoDB" id="10040at10239"/>
<dbReference type="Proteomes" id="UP000009248">
    <property type="component" value="Genome"/>
</dbReference>
<dbReference type="InterPro" id="IPR009235">
    <property type="entry name" value="AcMNPV_Orf146"/>
</dbReference>
<dbReference type="Pfam" id="PF05959">
    <property type="entry name" value="DUF884"/>
    <property type="match status" value="1"/>
</dbReference>
<sequence length="197" mass="21797">MNVYLYQPDGEQDNDVTFYMPHATNGVIVYLFKMGAEAAPDRTRLVSGYEAGRPIGLRLAVGACNDAFVLSCVRAPCVFRELFIHNRYTAPLGLAVVRAGRAAPEAWHVLSVHRRSEAKRTRHIRALRVHSNVGPDQCYPKALISLAGNVPASFLNTLQRCRAHHKDVAAMAMLCPDLRVDDSVVQFDGVQASIKLR</sequence>
<feature type="chain" id="PRO_0000133072" description="Uncharacterized 21.8 kDa protein">
    <location>
        <begin position="1"/>
        <end position="197"/>
    </location>
</feature>
<name>Y146_NPVOP</name>
<organism>
    <name type="scientific">Orgyia pseudotsugata multicapsid polyhedrosis virus</name>
    <name type="common">OpMNPV</name>
    <dbReference type="NCBI Taxonomy" id="262177"/>
    <lineage>
        <taxon>Viruses</taxon>
        <taxon>Viruses incertae sedis</taxon>
        <taxon>Naldaviricetes</taxon>
        <taxon>Lefavirales</taxon>
        <taxon>Baculoviridae</taxon>
        <taxon>Alphabaculovirus</taxon>
        <taxon>Alphabaculovirus orpseudotsugatae</taxon>
    </lineage>
</organism>
<organismHost>
    <name type="scientific">Orgyia pseudotsugata</name>
    <name type="common">Douglas-fir tussock moth</name>
    <dbReference type="NCBI Taxonomy" id="33414"/>
</organismHost>
<accession>O10375</accession>
<proteinExistence type="predicted"/>
<keyword id="KW-1185">Reference proteome</keyword>
<reference key="1">
    <citation type="journal article" date="1997" name="Virology">
        <title>The sequence of the Orgyia pseudotsugata multinucleocapsid nuclear polyhedrosis virus genome.</title>
        <authorList>
            <person name="Ahrens C.H."/>
            <person name="Russell R.R."/>
            <person name="Funk C.J."/>
            <person name="Evans J."/>
            <person name="Harwood S."/>
            <person name="Rohrmann G.F."/>
        </authorList>
    </citation>
    <scope>NUCLEOTIDE SEQUENCE [LARGE SCALE GENOMIC DNA]</scope>
</reference>
<gene>
    <name type="ORF">ORF144</name>
</gene>
<protein>
    <recommendedName>
        <fullName>Uncharacterized 21.8 kDa protein</fullName>
    </recommendedName>
</protein>